<accession>Q5P7B3</accession>
<dbReference type="EC" id="1.17.7.3" evidence="1"/>
<dbReference type="EMBL" id="CR555306">
    <property type="protein sequence ID" value="CAI06798.1"/>
    <property type="molecule type" value="Genomic_DNA"/>
</dbReference>
<dbReference type="RefSeq" id="WP_011236526.1">
    <property type="nucleotide sequence ID" value="NC_006513.1"/>
</dbReference>
<dbReference type="SMR" id="Q5P7B3"/>
<dbReference type="STRING" id="76114.ebA1261"/>
<dbReference type="KEGG" id="eba:ebA1261"/>
<dbReference type="eggNOG" id="COG0821">
    <property type="taxonomic scope" value="Bacteria"/>
</dbReference>
<dbReference type="HOGENOM" id="CLU_042258_1_0_4"/>
<dbReference type="OrthoDB" id="9803214at2"/>
<dbReference type="UniPathway" id="UPA00056">
    <property type="reaction ID" value="UER00096"/>
</dbReference>
<dbReference type="Proteomes" id="UP000006552">
    <property type="component" value="Chromosome"/>
</dbReference>
<dbReference type="GO" id="GO:0051539">
    <property type="term" value="F:4 iron, 4 sulfur cluster binding"/>
    <property type="evidence" value="ECO:0007669"/>
    <property type="project" value="UniProtKB-UniRule"/>
</dbReference>
<dbReference type="GO" id="GO:0046429">
    <property type="term" value="F:4-hydroxy-3-methylbut-2-en-1-yl diphosphate synthase activity (ferredoxin)"/>
    <property type="evidence" value="ECO:0007669"/>
    <property type="project" value="UniProtKB-UniRule"/>
</dbReference>
<dbReference type="GO" id="GO:0141197">
    <property type="term" value="F:4-hydroxy-3-methylbut-2-enyl-diphosphate synthase activity (flavodoxin)"/>
    <property type="evidence" value="ECO:0007669"/>
    <property type="project" value="UniProtKB-EC"/>
</dbReference>
<dbReference type="GO" id="GO:0005506">
    <property type="term" value="F:iron ion binding"/>
    <property type="evidence" value="ECO:0007669"/>
    <property type="project" value="InterPro"/>
</dbReference>
<dbReference type="GO" id="GO:0019288">
    <property type="term" value="P:isopentenyl diphosphate biosynthetic process, methylerythritol 4-phosphate pathway"/>
    <property type="evidence" value="ECO:0007669"/>
    <property type="project" value="UniProtKB-UniRule"/>
</dbReference>
<dbReference type="GO" id="GO:0016114">
    <property type="term" value="P:terpenoid biosynthetic process"/>
    <property type="evidence" value="ECO:0007669"/>
    <property type="project" value="InterPro"/>
</dbReference>
<dbReference type="FunFam" id="3.20.20.20:FF:000001">
    <property type="entry name" value="4-hydroxy-3-methylbut-2-en-1-yl diphosphate synthase (flavodoxin)"/>
    <property type="match status" value="1"/>
</dbReference>
<dbReference type="FunFam" id="3.30.413.10:FF:000012">
    <property type="entry name" value="4-hydroxy-3-methylbut-2-en-1-yl diphosphate synthase (flavodoxin)"/>
    <property type="match status" value="1"/>
</dbReference>
<dbReference type="Gene3D" id="3.20.20.20">
    <property type="entry name" value="Dihydropteroate synthase-like"/>
    <property type="match status" value="1"/>
</dbReference>
<dbReference type="Gene3D" id="3.30.413.10">
    <property type="entry name" value="Sulfite Reductase Hemoprotein, domain 1"/>
    <property type="match status" value="1"/>
</dbReference>
<dbReference type="HAMAP" id="MF_00159">
    <property type="entry name" value="IspG"/>
    <property type="match status" value="1"/>
</dbReference>
<dbReference type="InterPro" id="IPR011005">
    <property type="entry name" value="Dihydropteroate_synth-like_sf"/>
</dbReference>
<dbReference type="InterPro" id="IPR016425">
    <property type="entry name" value="IspG_bac"/>
</dbReference>
<dbReference type="InterPro" id="IPR004588">
    <property type="entry name" value="IspG_bac-typ"/>
</dbReference>
<dbReference type="InterPro" id="IPR045854">
    <property type="entry name" value="NO2/SO3_Rdtase_4Fe4S_sf"/>
</dbReference>
<dbReference type="NCBIfam" id="TIGR00612">
    <property type="entry name" value="ispG_gcpE"/>
    <property type="match status" value="1"/>
</dbReference>
<dbReference type="NCBIfam" id="NF001540">
    <property type="entry name" value="PRK00366.1"/>
    <property type="match status" value="1"/>
</dbReference>
<dbReference type="PANTHER" id="PTHR30454">
    <property type="entry name" value="4-HYDROXY-3-METHYLBUT-2-EN-1-YL DIPHOSPHATE SYNTHASE"/>
    <property type="match status" value="1"/>
</dbReference>
<dbReference type="PANTHER" id="PTHR30454:SF0">
    <property type="entry name" value="4-HYDROXY-3-METHYLBUT-2-EN-1-YL DIPHOSPHATE SYNTHASE (FERREDOXIN), CHLOROPLASTIC"/>
    <property type="match status" value="1"/>
</dbReference>
<dbReference type="Pfam" id="PF04551">
    <property type="entry name" value="GcpE"/>
    <property type="match status" value="1"/>
</dbReference>
<dbReference type="PIRSF" id="PIRSF004640">
    <property type="entry name" value="IspG"/>
    <property type="match status" value="1"/>
</dbReference>
<reference key="1">
    <citation type="journal article" date="2005" name="Arch. Microbiol.">
        <title>The genome sequence of an anaerobic aromatic-degrading denitrifying bacterium, strain EbN1.</title>
        <authorList>
            <person name="Rabus R."/>
            <person name="Kube M."/>
            <person name="Heider J."/>
            <person name="Beck A."/>
            <person name="Heitmann K."/>
            <person name="Widdel F."/>
            <person name="Reinhardt R."/>
        </authorList>
    </citation>
    <scope>NUCLEOTIDE SEQUENCE [LARGE SCALE GENOMIC DNA]</scope>
    <source>
        <strain>DSM 19018 / LMG 30748 / EbN1</strain>
    </source>
</reference>
<organism>
    <name type="scientific">Aromatoleum aromaticum (strain DSM 19018 / LMG 30748 / EbN1)</name>
    <name type="common">Azoarcus sp. (strain EbN1)</name>
    <dbReference type="NCBI Taxonomy" id="76114"/>
    <lineage>
        <taxon>Bacteria</taxon>
        <taxon>Pseudomonadati</taxon>
        <taxon>Pseudomonadota</taxon>
        <taxon>Betaproteobacteria</taxon>
        <taxon>Rhodocyclales</taxon>
        <taxon>Rhodocyclaceae</taxon>
        <taxon>Aromatoleum</taxon>
    </lineage>
</organism>
<sequence>MATNSSSGSLVRHKTRQVRVGRISIGSNAPVVVQSMTNTDTVDVLGTAMQVAELARAGSELVRITVNNEAAAKAVPHIRDRLLALNVDVPLVGDFHYNGHKLLSEHPACAEALAKLRINPGNVGAGAKRDPQFAAIVDIACRHDKPVRIGVNWGSLDPSVLARVMDQNAKLAQPRDANAVMREALVVSALESAAKAEEYGLGGDRIILSAKVSSVQDLIAVYRDLAARCDYPLHLGLTEAGMGSKGIVASTAALAVLLQEGIGDTIRISLTPEPNGSRAQEVVVAQEILQTMGLRAFTPMVIACPGCGRTTSTFFQELASGIQSYVRDQMPVWREQYDGVENMTVAVMGCVVNGPGESKHANIGISLPGTGETPAAPVFVDGEKTVTLRGDNIGTEFKAIVDDYVATRYVKKAG</sequence>
<keyword id="KW-0004">4Fe-4S</keyword>
<keyword id="KW-0408">Iron</keyword>
<keyword id="KW-0411">Iron-sulfur</keyword>
<keyword id="KW-0414">Isoprene biosynthesis</keyword>
<keyword id="KW-0479">Metal-binding</keyword>
<keyword id="KW-0560">Oxidoreductase</keyword>
<keyword id="KW-1185">Reference proteome</keyword>
<comment type="function">
    <text evidence="1">Converts 2C-methyl-D-erythritol 2,4-cyclodiphosphate (ME-2,4cPP) into 1-hydroxy-2-methyl-2-(E)-butenyl 4-diphosphate.</text>
</comment>
<comment type="catalytic activity">
    <reaction evidence="1">
        <text>(2E)-4-hydroxy-3-methylbut-2-enyl diphosphate + oxidized [flavodoxin] + H2O + 2 H(+) = 2-C-methyl-D-erythritol 2,4-cyclic diphosphate + reduced [flavodoxin]</text>
        <dbReference type="Rhea" id="RHEA:43604"/>
        <dbReference type="Rhea" id="RHEA-COMP:10622"/>
        <dbReference type="Rhea" id="RHEA-COMP:10623"/>
        <dbReference type="ChEBI" id="CHEBI:15377"/>
        <dbReference type="ChEBI" id="CHEBI:15378"/>
        <dbReference type="ChEBI" id="CHEBI:57618"/>
        <dbReference type="ChEBI" id="CHEBI:58210"/>
        <dbReference type="ChEBI" id="CHEBI:58483"/>
        <dbReference type="ChEBI" id="CHEBI:128753"/>
        <dbReference type="EC" id="1.17.7.3"/>
    </reaction>
</comment>
<comment type="cofactor">
    <cofactor evidence="1">
        <name>[4Fe-4S] cluster</name>
        <dbReference type="ChEBI" id="CHEBI:49883"/>
    </cofactor>
    <text evidence="1">Binds 1 [4Fe-4S] cluster.</text>
</comment>
<comment type="pathway">
    <text evidence="1">Isoprenoid biosynthesis; isopentenyl diphosphate biosynthesis via DXP pathway; isopentenyl diphosphate from 1-deoxy-D-xylulose 5-phosphate: step 5/6.</text>
</comment>
<comment type="similarity">
    <text evidence="1">Belongs to the IspG family.</text>
</comment>
<feature type="chain" id="PRO_0000190526" description="4-hydroxy-3-methylbut-2-en-1-yl diphosphate synthase (flavodoxin)">
    <location>
        <begin position="1"/>
        <end position="414"/>
    </location>
</feature>
<feature type="binding site" evidence="1">
    <location>
        <position position="304"/>
    </location>
    <ligand>
        <name>[4Fe-4S] cluster</name>
        <dbReference type="ChEBI" id="CHEBI:49883"/>
    </ligand>
</feature>
<feature type="binding site" evidence="1">
    <location>
        <position position="307"/>
    </location>
    <ligand>
        <name>[4Fe-4S] cluster</name>
        <dbReference type="ChEBI" id="CHEBI:49883"/>
    </ligand>
</feature>
<feature type="binding site" evidence="1">
    <location>
        <position position="350"/>
    </location>
    <ligand>
        <name>[4Fe-4S] cluster</name>
        <dbReference type="ChEBI" id="CHEBI:49883"/>
    </ligand>
</feature>
<feature type="binding site" evidence="1">
    <location>
        <position position="357"/>
    </location>
    <ligand>
        <name>[4Fe-4S] cluster</name>
        <dbReference type="ChEBI" id="CHEBI:49883"/>
    </ligand>
</feature>
<evidence type="ECO:0000255" key="1">
    <source>
        <dbReference type="HAMAP-Rule" id="MF_00159"/>
    </source>
</evidence>
<name>ISPG_AROAE</name>
<protein>
    <recommendedName>
        <fullName evidence="1">4-hydroxy-3-methylbut-2-en-1-yl diphosphate synthase (flavodoxin)</fullName>
        <ecNumber evidence="1">1.17.7.3</ecNumber>
    </recommendedName>
    <alternativeName>
        <fullName evidence="1">1-hydroxy-2-methyl-2-(E)-butenyl 4-diphosphate synthase</fullName>
    </alternativeName>
</protein>
<gene>
    <name evidence="1" type="primary">ispG</name>
    <name type="ordered locus">AZOSEA06750</name>
    <name type="ORF">ebA1261</name>
</gene>
<proteinExistence type="inferred from homology"/>